<proteinExistence type="inferred from homology"/>
<accession>B0BAS3</accession>
<comment type="function">
    <text evidence="1">Catalyzes the conversion of glucosamine-6-phosphate to glucosamine-1-phosphate.</text>
</comment>
<comment type="catalytic activity">
    <reaction evidence="1">
        <text>alpha-D-glucosamine 1-phosphate = D-glucosamine 6-phosphate</text>
        <dbReference type="Rhea" id="RHEA:23424"/>
        <dbReference type="ChEBI" id="CHEBI:58516"/>
        <dbReference type="ChEBI" id="CHEBI:58725"/>
        <dbReference type="EC" id="5.4.2.10"/>
    </reaction>
</comment>
<comment type="cofactor">
    <cofactor evidence="1">
        <name>Mg(2+)</name>
        <dbReference type="ChEBI" id="CHEBI:18420"/>
    </cofactor>
    <text evidence="1">Binds 1 Mg(2+) ion per subunit.</text>
</comment>
<comment type="PTM">
    <text evidence="1">Activated by phosphorylation.</text>
</comment>
<comment type="similarity">
    <text evidence="1">Belongs to the phosphohexose mutase family.</text>
</comment>
<keyword id="KW-0413">Isomerase</keyword>
<keyword id="KW-0460">Magnesium</keyword>
<keyword id="KW-0479">Metal-binding</keyword>
<keyword id="KW-0597">Phosphoprotein</keyword>
<name>GLMM_CHLTB</name>
<sequence>MTRDVSQLFGTDGVRGRANFEPMTVETSVLLGKAIAGVLLEKHAGKHRVVVGKDTRLSGYMFENALIAGLTSMGIETLMLGPIPTPGVAFITRAYRADAGIMISASHNPYRDNGIKIFSSDGFKIGQAVEERIEAMVASKDFGKLPDDHAVGKNKRVKDATGRYIEYAKATFPKGRTLKGLRIVLDCAHGATYRVAPSVFEELDAEVICYGCEPSGCNINAGCGALWPSTIQKAVIEHKADVGIALDGDGDRLIMVDEKGHIVDGDMLLSICASDLKRRQALPDNRVVATVMTNFGVLRYLESLGIQVTISPVGDRHVLQHMLENQAVLGGEQSGHMIFLDYNTTGDGIVSALQVLRIMIESESTLSDLTACIVKSPQALINVPVTKKVPLESLANVQGVLKEVKEVLGDSGRILLRYSGTENICRVMVEGTKKHQVDSLAKTIVDVVEAEIGAGISE</sequence>
<feature type="chain" id="PRO_1000201074" description="Phosphoglucosamine mutase">
    <location>
        <begin position="1"/>
        <end position="458"/>
    </location>
</feature>
<feature type="active site" description="Phosphoserine intermediate" evidence="1">
    <location>
        <position position="106"/>
    </location>
</feature>
<feature type="binding site" description="via phosphate group" evidence="1">
    <location>
        <position position="106"/>
    </location>
    <ligand>
        <name>Mg(2+)</name>
        <dbReference type="ChEBI" id="CHEBI:18420"/>
    </ligand>
</feature>
<feature type="binding site" evidence="1">
    <location>
        <position position="247"/>
    </location>
    <ligand>
        <name>Mg(2+)</name>
        <dbReference type="ChEBI" id="CHEBI:18420"/>
    </ligand>
</feature>
<feature type="binding site" evidence="1">
    <location>
        <position position="249"/>
    </location>
    <ligand>
        <name>Mg(2+)</name>
        <dbReference type="ChEBI" id="CHEBI:18420"/>
    </ligand>
</feature>
<feature type="binding site" evidence="1">
    <location>
        <position position="251"/>
    </location>
    <ligand>
        <name>Mg(2+)</name>
        <dbReference type="ChEBI" id="CHEBI:18420"/>
    </ligand>
</feature>
<feature type="modified residue" description="Phosphoserine" evidence="1">
    <location>
        <position position="106"/>
    </location>
</feature>
<dbReference type="EC" id="5.4.2.10" evidence="1"/>
<dbReference type="EMBL" id="AM884177">
    <property type="protein sequence ID" value="CAP06585.1"/>
    <property type="molecule type" value="Genomic_DNA"/>
</dbReference>
<dbReference type="RefSeq" id="WP_009873427.1">
    <property type="nucleotide sequence ID" value="NC_010280.2"/>
</dbReference>
<dbReference type="SMR" id="B0BAS3"/>
<dbReference type="KEGG" id="ctl:CTLon_0187"/>
<dbReference type="HOGENOM" id="CLU_016950_7_0_0"/>
<dbReference type="Proteomes" id="UP001154401">
    <property type="component" value="Chromosome"/>
</dbReference>
<dbReference type="GO" id="GO:0005829">
    <property type="term" value="C:cytosol"/>
    <property type="evidence" value="ECO:0007669"/>
    <property type="project" value="TreeGrafter"/>
</dbReference>
<dbReference type="GO" id="GO:0000287">
    <property type="term" value="F:magnesium ion binding"/>
    <property type="evidence" value="ECO:0007669"/>
    <property type="project" value="UniProtKB-UniRule"/>
</dbReference>
<dbReference type="GO" id="GO:0008966">
    <property type="term" value="F:phosphoglucosamine mutase activity"/>
    <property type="evidence" value="ECO:0007669"/>
    <property type="project" value="UniProtKB-UniRule"/>
</dbReference>
<dbReference type="GO" id="GO:0004615">
    <property type="term" value="F:phosphomannomutase activity"/>
    <property type="evidence" value="ECO:0007669"/>
    <property type="project" value="TreeGrafter"/>
</dbReference>
<dbReference type="GO" id="GO:0005975">
    <property type="term" value="P:carbohydrate metabolic process"/>
    <property type="evidence" value="ECO:0007669"/>
    <property type="project" value="InterPro"/>
</dbReference>
<dbReference type="GO" id="GO:0009252">
    <property type="term" value="P:peptidoglycan biosynthetic process"/>
    <property type="evidence" value="ECO:0007669"/>
    <property type="project" value="TreeGrafter"/>
</dbReference>
<dbReference type="GO" id="GO:0006048">
    <property type="term" value="P:UDP-N-acetylglucosamine biosynthetic process"/>
    <property type="evidence" value="ECO:0007669"/>
    <property type="project" value="TreeGrafter"/>
</dbReference>
<dbReference type="CDD" id="cd05802">
    <property type="entry name" value="GlmM"/>
    <property type="match status" value="1"/>
</dbReference>
<dbReference type="FunFam" id="3.30.310.50:FF:000001">
    <property type="entry name" value="Phosphoglucosamine mutase"/>
    <property type="match status" value="1"/>
</dbReference>
<dbReference type="FunFam" id="3.40.120.10:FF:000001">
    <property type="entry name" value="Phosphoglucosamine mutase"/>
    <property type="match status" value="1"/>
</dbReference>
<dbReference type="FunFam" id="3.40.120.10:FF:000003">
    <property type="entry name" value="Phosphoglucosamine mutase"/>
    <property type="match status" value="1"/>
</dbReference>
<dbReference type="Gene3D" id="3.40.120.10">
    <property type="entry name" value="Alpha-D-Glucose-1,6-Bisphosphate, subunit A, domain 3"/>
    <property type="match status" value="3"/>
</dbReference>
<dbReference type="Gene3D" id="3.30.310.50">
    <property type="entry name" value="Alpha-D-phosphohexomutase, C-terminal domain"/>
    <property type="match status" value="1"/>
</dbReference>
<dbReference type="HAMAP" id="MF_01554_B">
    <property type="entry name" value="GlmM_B"/>
    <property type="match status" value="1"/>
</dbReference>
<dbReference type="InterPro" id="IPR005844">
    <property type="entry name" value="A-D-PHexomutase_a/b/a-I"/>
</dbReference>
<dbReference type="InterPro" id="IPR016055">
    <property type="entry name" value="A-D-PHexomutase_a/b/a-I/II/III"/>
</dbReference>
<dbReference type="InterPro" id="IPR005845">
    <property type="entry name" value="A-D-PHexomutase_a/b/a-II"/>
</dbReference>
<dbReference type="InterPro" id="IPR005846">
    <property type="entry name" value="A-D-PHexomutase_a/b/a-III"/>
</dbReference>
<dbReference type="InterPro" id="IPR005843">
    <property type="entry name" value="A-D-PHexomutase_C"/>
</dbReference>
<dbReference type="InterPro" id="IPR036900">
    <property type="entry name" value="A-D-PHexomutase_C_sf"/>
</dbReference>
<dbReference type="InterPro" id="IPR016066">
    <property type="entry name" value="A-D-PHexomutase_CS"/>
</dbReference>
<dbReference type="InterPro" id="IPR005841">
    <property type="entry name" value="Alpha-D-phosphohexomutase_SF"/>
</dbReference>
<dbReference type="InterPro" id="IPR006352">
    <property type="entry name" value="GlmM_bact"/>
</dbReference>
<dbReference type="InterPro" id="IPR050060">
    <property type="entry name" value="Phosphoglucosamine_mutase"/>
</dbReference>
<dbReference type="NCBIfam" id="TIGR01455">
    <property type="entry name" value="glmM"/>
    <property type="match status" value="1"/>
</dbReference>
<dbReference type="NCBIfam" id="NF008139">
    <property type="entry name" value="PRK10887.1"/>
    <property type="match status" value="1"/>
</dbReference>
<dbReference type="PANTHER" id="PTHR42946:SF1">
    <property type="entry name" value="PHOSPHOGLUCOMUTASE (ALPHA-D-GLUCOSE-1,6-BISPHOSPHATE-DEPENDENT)"/>
    <property type="match status" value="1"/>
</dbReference>
<dbReference type="PANTHER" id="PTHR42946">
    <property type="entry name" value="PHOSPHOHEXOSE MUTASE"/>
    <property type="match status" value="1"/>
</dbReference>
<dbReference type="Pfam" id="PF02878">
    <property type="entry name" value="PGM_PMM_I"/>
    <property type="match status" value="1"/>
</dbReference>
<dbReference type="Pfam" id="PF02879">
    <property type="entry name" value="PGM_PMM_II"/>
    <property type="match status" value="1"/>
</dbReference>
<dbReference type="Pfam" id="PF02880">
    <property type="entry name" value="PGM_PMM_III"/>
    <property type="match status" value="1"/>
</dbReference>
<dbReference type="Pfam" id="PF00408">
    <property type="entry name" value="PGM_PMM_IV"/>
    <property type="match status" value="1"/>
</dbReference>
<dbReference type="PRINTS" id="PR00509">
    <property type="entry name" value="PGMPMM"/>
</dbReference>
<dbReference type="SUPFAM" id="SSF55957">
    <property type="entry name" value="Phosphoglucomutase, C-terminal domain"/>
    <property type="match status" value="1"/>
</dbReference>
<dbReference type="SUPFAM" id="SSF53738">
    <property type="entry name" value="Phosphoglucomutase, first 3 domains"/>
    <property type="match status" value="3"/>
</dbReference>
<dbReference type="PROSITE" id="PS00710">
    <property type="entry name" value="PGM_PMM"/>
    <property type="match status" value="1"/>
</dbReference>
<evidence type="ECO:0000255" key="1">
    <source>
        <dbReference type="HAMAP-Rule" id="MF_01554"/>
    </source>
</evidence>
<reference key="1">
    <citation type="journal article" date="2008" name="Genome Res.">
        <title>Chlamydia trachomatis: genome sequence analysis of lymphogranuloma venereum isolates.</title>
        <authorList>
            <person name="Thomson N.R."/>
            <person name="Holden M.T.G."/>
            <person name="Carder C."/>
            <person name="Lennard N."/>
            <person name="Lockey S.J."/>
            <person name="Marsh P."/>
            <person name="Skipp P."/>
            <person name="O'Connor C.D."/>
            <person name="Goodhead I."/>
            <person name="Norbertzcak H."/>
            <person name="Harris B."/>
            <person name="Ormond D."/>
            <person name="Rance R."/>
            <person name="Quail M.A."/>
            <person name="Parkhill J."/>
            <person name="Stephens R.S."/>
            <person name="Clarke I.N."/>
        </authorList>
    </citation>
    <scope>NUCLEOTIDE SEQUENCE [LARGE SCALE GENOMIC DNA]</scope>
    <source>
        <strain>UCH-1/proctitis</strain>
    </source>
</reference>
<protein>
    <recommendedName>
        <fullName evidence="1">Phosphoglucosamine mutase</fullName>
        <ecNumber evidence="1">5.4.2.10</ecNumber>
    </recommendedName>
</protein>
<organism>
    <name type="scientific">Chlamydia trachomatis serovar L2b (strain UCH-1/proctitis)</name>
    <dbReference type="NCBI Taxonomy" id="471473"/>
    <lineage>
        <taxon>Bacteria</taxon>
        <taxon>Pseudomonadati</taxon>
        <taxon>Chlamydiota</taxon>
        <taxon>Chlamydiia</taxon>
        <taxon>Chlamydiales</taxon>
        <taxon>Chlamydiaceae</taxon>
        <taxon>Chlamydia/Chlamydophila group</taxon>
        <taxon>Chlamydia</taxon>
    </lineage>
</organism>
<gene>
    <name evidence="1" type="primary">glmM</name>
    <name type="ordered locus">CTLon_0187</name>
</gene>